<feature type="chain" id="PRO_1000148092" description="ADP-L-glycero-D-manno-heptose-6-epimerase">
    <location>
        <begin position="1"/>
        <end position="310"/>
    </location>
</feature>
<feature type="active site" description="Proton acceptor" evidence="1">
    <location>
        <position position="140"/>
    </location>
</feature>
<feature type="active site" description="Proton acceptor" evidence="1">
    <location>
        <position position="178"/>
    </location>
</feature>
<feature type="binding site" evidence="1">
    <location>
        <begin position="10"/>
        <end position="11"/>
    </location>
    <ligand>
        <name>NADP(+)</name>
        <dbReference type="ChEBI" id="CHEBI:58349"/>
    </ligand>
</feature>
<feature type="binding site" evidence="1">
    <location>
        <begin position="31"/>
        <end position="32"/>
    </location>
    <ligand>
        <name>NADP(+)</name>
        <dbReference type="ChEBI" id="CHEBI:58349"/>
    </ligand>
</feature>
<feature type="binding site" evidence="1">
    <location>
        <position position="38"/>
    </location>
    <ligand>
        <name>NADP(+)</name>
        <dbReference type="ChEBI" id="CHEBI:58349"/>
    </ligand>
</feature>
<feature type="binding site" evidence="1">
    <location>
        <position position="53"/>
    </location>
    <ligand>
        <name>NADP(+)</name>
        <dbReference type="ChEBI" id="CHEBI:58349"/>
    </ligand>
</feature>
<feature type="binding site" evidence="1">
    <location>
        <begin position="75"/>
        <end position="79"/>
    </location>
    <ligand>
        <name>NADP(+)</name>
        <dbReference type="ChEBI" id="CHEBI:58349"/>
    </ligand>
</feature>
<feature type="binding site" evidence="1">
    <location>
        <position position="92"/>
    </location>
    <ligand>
        <name>NADP(+)</name>
        <dbReference type="ChEBI" id="CHEBI:58349"/>
    </ligand>
</feature>
<feature type="binding site" evidence="1">
    <location>
        <position position="144"/>
    </location>
    <ligand>
        <name>NADP(+)</name>
        <dbReference type="ChEBI" id="CHEBI:58349"/>
    </ligand>
</feature>
<feature type="binding site" evidence="1">
    <location>
        <position position="169"/>
    </location>
    <ligand>
        <name>substrate</name>
    </ligand>
</feature>
<feature type="binding site" evidence="1">
    <location>
        <position position="170"/>
    </location>
    <ligand>
        <name>NADP(+)</name>
        <dbReference type="ChEBI" id="CHEBI:58349"/>
    </ligand>
</feature>
<feature type="binding site" evidence="1">
    <location>
        <position position="178"/>
    </location>
    <ligand>
        <name>NADP(+)</name>
        <dbReference type="ChEBI" id="CHEBI:58349"/>
    </ligand>
</feature>
<feature type="binding site" evidence="1">
    <location>
        <position position="180"/>
    </location>
    <ligand>
        <name>substrate</name>
    </ligand>
</feature>
<feature type="binding site" evidence="1">
    <location>
        <position position="187"/>
    </location>
    <ligand>
        <name>substrate</name>
    </ligand>
</feature>
<feature type="binding site" evidence="1">
    <location>
        <begin position="201"/>
        <end position="204"/>
    </location>
    <ligand>
        <name>substrate</name>
    </ligand>
</feature>
<feature type="binding site" evidence="1">
    <location>
        <position position="209"/>
    </location>
    <ligand>
        <name>substrate</name>
    </ligand>
</feature>
<feature type="binding site" evidence="1">
    <location>
        <position position="272"/>
    </location>
    <ligand>
        <name>substrate</name>
    </ligand>
</feature>
<reference key="1">
    <citation type="journal article" date="2011" name="J. Bacteriol.">
        <title>Comparative genomics of 28 Salmonella enterica isolates: evidence for CRISPR-mediated adaptive sublineage evolution.</title>
        <authorList>
            <person name="Fricke W.F."/>
            <person name="Mammel M.K."/>
            <person name="McDermott P.F."/>
            <person name="Tartera C."/>
            <person name="White D.G."/>
            <person name="Leclerc J.E."/>
            <person name="Ravel J."/>
            <person name="Cebula T.A."/>
        </authorList>
    </citation>
    <scope>NUCLEOTIDE SEQUENCE [LARGE SCALE GENOMIC DNA]</scope>
    <source>
        <strain>SL254</strain>
    </source>
</reference>
<evidence type="ECO:0000255" key="1">
    <source>
        <dbReference type="HAMAP-Rule" id="MF_01601"/>
    </source>
</evidence>
<gene>
    <name evidence="1" type="primary">hldD</name>
    <name type="ordered locus">SNSL254_A3990</name>
</gene>
<keyword id="KW-0119">Carbohydrate metabolism</keyword>
<keyword id="KW-0413">Isomerase</keyword>
<keyword id="KW-0521">NADP</keyword>
<sequence length="310" mass="34865">MIIVTGGAGFIGSNIVKALNDKGITDILVVDNLKDGTKFVNLVDLNIADYMDKEDFLIQIMSGEELGDIEAIFHEGACSSTTEWDGKYMMDNNYQYSKELLHYCLEREIPFLYASSAATYGGRTSDFIESREYEKPLNVYGYSKFLFDEYVRQILPEANSQIVGFRYFNVYGPREGHKGSMASVAFHLNTQLNNGESPKLFEGSENFKRDFVYVGDVAAVNLWFLESGKSGIFNLGTGRAESFQAVADATLAYHKKGSIEYIPFPDKLKGRYQAFTQADLTNLRNAGYDKPFKTVAEGVTEYMAWLNRDS</sequence>
<organism>
    <name type="scientific">Salmonella newport (strain SL254)</name>
    <dbReference type="NCBI Taxonomy" id="423368"/>
    <lineage>
        <taxon>Bacteria</taxon>
        <taxon>Pseudomonadati</taxon>
        <taxon>Pseudomonadota</taxon>
        <taxon>Gammaproteobacteria</taxon>
        <taxon>Enterobacterales</taxon>
        <taxon>Enterobacteriaceae</taxon>
        <taxon>Salmonella</taxon>
    </lineage>
</organism>
<proteinExistence type="inferred from homology"/>
<dbReference type="EC" id="5.1.3.20" evidence="1"/>
<dbReference type="EMBL" id="CP001113">
    <property type="protein sequence ID" value="ACF61513.1"/>
    <property type="molecule type" value="Genomic_DNA"/>
</dbReference>
<dbReference type="SMR" id="B4SXC1"/>
<dbReference type="KEGG" id="see:SNSL254_A3990"/>
<dbReference type="HOGENOM" id="CLU_007383_1_3_6"/>
<dbReference type="UniPathway" id="UPA00356">
    <property type="reaction ID" value="UER00440"/>
</dbReference>
<dbReference type="Proteomes" id="UP000008824">
    <property type="component" value="Chromosome"/>
</dbReference>
<dbReference type="GO" id="GO:0008712">
    <property type="term" value="F:ADP-glyceromanno-heptose 6-epimerase activity"/>
    <property type="evidence" value="ECO:0007669"/>
    <property type="project" value="UniProtKB-UniRule"/>
</dbReference>
<dbReference type="GO" id="GO:0050661">
    <property type="term" value="F:NADP binding"/>
    <property type="evidence" value="ECO:0007669"/>
    <property type="project" value="InterPro"/>
</dbReference>
<dbReference type="GO" id="GO:0097171">
    <property type="term" value="P:ADP-L-glycero-beta-D-manno-heptose biosynthetic process"/>
    <property type="evidence" value="ECO:0007669"/>
    <property type="project" value="UniProtKB-UniPathway"/>
</dbReference>
<dbReference type="GO" id="GO:0005975">
    <property type="term" value="P:carbohydrate metabolic process"/>
    <property type="evidence" value="ECO:0007669"/>
    <property type="project" value="UniProtKB-UniRule"/>
</dbReference>
<dbReference type="CDD" id="cd05248">
    <property type="entry name" value="ADP_GME_SDR_e"/>
    <property type="match status" value="1"/>
</dbReference>
<dbReference type="Gene3D" id="3.40.50.720">
    <property type="entry name" value="NAD(P)-binding Rossmann-like Domain"/>
    <property type="match status" value="1"/>
</dbReference>
<dbReference type="Gene3D" id="3.90.25.10">
    <property type="entry name" value="UDP-galactose 4-epimerase, domain 1"/>
    <property type="match status" value="1"/>
</dbReference>
<dbReference type="HAMAP" id="MF_01601">
    <property type="entry name" value="Heptose_epimerase"/>
    <property type="match status" value="1"/>
</dbReference>
<dbReference type="InterPro" id="IPR001509">
    <property type="entry name" value="Epimerase_deHydtase"/>
</dbReference>
<dbReference type="InterPro" id="IPR011912">
    <property type="entry name" value="Heptose_epim"/>
</dbReference>
<dbReference type="InterPro" id="IPR036291">
    <property type="entry name" value="NAD(P)-bd_dom_sf"/>
</dbReference>
<dbReference type="NCBIfam" id="TIGR02197">
    <property type="entry name" value="heptose_epim"/>
    <property type="match status" value="1"/>
</dbReference>
<dbReference type="NCBIfam" id="NF008360">
    <property type="entry name" value="PRK11150.1"/>
    <property type="match status" value="1"/>
</dbReference>
<dbReference type="PANTHER" id="PTHR43103:SF3">
    <property type="entry name" value="ADP-L-GLYCERO-D-MANNO-HEPTOSE-6-EPIMERASE"/>
    <property type="match status" value="1"/>
</dbReference>
<dbReference type="PANTHER" id="PTHR43103">
    <property type="entry name" value="NUCLEOSIDE-DIPHOSPHATE-SUGAR EPIMERASE"/>
    <property type="match status" value="1"/>
</dbReference>
<dbReference type="Pfam" id="PF01370">
    <property type="entry name" value="Epimerase"/>
    <property type="match status" value="1"/>
</dbReference>
<dbReference type="SUPFAM" id="SSF51735">
    <property type="entry name" value="NAD(P)-binding Rossmann-fold domains"/>
    <property type="match status" value="1"/>
</dbReference>
<name>HLDD_SALNS</name>
<protein>
    <recommendedName>
        <fullName evidence="1">ADP-L-glycero-D-manno-heptose-6-epimerase</fullName>
        <ecNumber evidence="1">5.1.3.20</ecNumber>
    </recommendedName>
    <alternativeName>
        <fullName evidence="1">ADP-L-glycero-beta-D-manno-heptose-6-epimerase</fullName>
        <shortName evidence="1">ADP-glyceromanno-heptose 6-epimerase</shortName>
        <shortName evidence="1">ADP-hep 6-epimerase</shortName>
        <shortName evidence="1">AGME</shortName>
    </alternativeName>
</protein>
<accession>B4SXC1</accession>
<comment type="function">
    <text evidence="1">Catalyzes the interconversion between ADP-D-glycero-beta-D-manno-heptose and ADP-L-glycero-beta-D-manno-heptose via an epimerization at carbon 6 of the heptose.</text>
</comment>
<comment type="catalytic activity">
    <reaction evidence="1">
        <text>ADP-D-glycero-beta-D-manno-heptose = ADP-L-glycero-beta-D-manno-heptose</text>
        <dbReference type="Rhea" id="RHEA:17577"/>
        <dbReference type="ChEBI" id="CHEBI:59967"/>
        <dbReference type="ChEBI" id="CHEBI:61506"/>
        <dbReference type="EC" id="5.1.3.20"/>
    </reaction>
</comment>
<comment type="cofactor">
    <cofactor evidence="1">
        <name>NADP(+)</name>
        <dbReference type="ChEBI" id="CHEBI:58349"/>
    </cofactor>
    <text evidence="1">Binds 1 NADP(+) per subunit.</text>
</comment>
<comment type="pathway">
    <text evidence="1">Nucleotide-sugar biosynthesis; ADP-L-glycero-beta-D-manno-heptose biosynthesis; ADP-L-glycero-beta-D-manno-heptose from D-glycero-beta-D-manno-heptose 7-phosphate: step 4/4.</text>
</comment>
<comment type="subunit">
    <text evidence="1">Homopentamer.</text>
</comment>
<comment type="domain">
    <text evidence="1">Contains a large N-terminal NADP-binding domain, and a smaller C-terminal substrate-binding domain.</text>
</comment>
<comment type="similarity">
    <text evidence="1">Belongs to the NAD(P)-dependent epimerase/dehydratase family. HldD subfamily.</text>
</comment>